<gene>
    <name evidence="1" type="primary">torD</name>
    <name type="ordered locus">STM3821</name>
</gene>
<comment type="function">
    <text evidence="1">Involved in the biogenesis of TorA. Acts on TorA before the insertion of the molybdenum cofactor and, as a result, probably favors a conformation of the apoenzyme that is competent for acquiring the cofactor.</text>
</comment>
<comment type="subcellular location">
    <subcellularLocation>
        <location evidence="1">Cytoplasm</location>
    </subcellularLocation>
</comment>
<comment type="similarity">
    <text evidence="1">Belongs to the TorD/DmsD family. TorD subfamily.</text>
</comment>
<organism>
    <name type="scientific">Salmonella typhimurium (strain LT2 / SGSC1412 / ATCC 700720)</name>
    <dbReference type="NCBI Taxonomy" id="99287"/>
    <lineage>
        <taxon>Bacteria</taxon>
        <taxon>Pseudomonadati</taxon>
        <taxon>Pseudomonadota</taxon>
        <taxon>Gammaproteobacteria</taxon>
        <taxon>Enterobacterales</taxon>
        <taxon>Enterobacteriaceae</taxon>
        <taxon>Salmonella</taxon>
    </lineage>
</organism>
<evidence type="ECO:0000255" key="1">
    <source>
        <dbReference type="HAMAP-Rule" id="MF_01150"/>
    </source>
</evidence>
<keyword id="KW-0143">Chaperone</keyword>
<keyword id="KW-0963">Cytoplasm</keyword>
<keyword id="KW-1185">Reference proteome</keyword>
<name>TORD_SALTY</name>
<dbReference type="EMBL" id="AE006468">
    <property type="protein sequence ID" value="AAL22680.1"/>
    <property type="molecule type" value="Genomic_DNA"/>
</dbReference>
<dbReference type="RefSeq" id="NP_462721.1">
    <property type="nucleotide sequence ID" value="NC_003197.2"/>
</dbReference>
<dbReference type="RefSeq" id="WP_000595421.1">
    <property type="nucleotide sequence ID" value="NC_003197.2"/>
</dbReference>
<dbReference type="SMR" id="Q8ZKZ8"/>
<dbReference type="STRING" id="99287.STM3821"/>
<dbReference type="PaxDb" id="99287-STM3821"/>
<dbReference type="GeneID" id="1255348"/>
<dbReference type="KEGG" id="stm:STM3821"/>
<dbReference type="PATRIC" id="fig|99287.12.peg.4045"/>
<dbReference type="HOGENOM" id="CLU_077650_4_0_6"/>
<dbReference type="OMA" id="PYASMYI"/>
<dbReference type="PhylomeDB" id="Q8ZKZ8"/>
<dbReference type="BioCyc" id="SENT99287:STM3821-MONOMER"/>
<dbReference type="Proteomes" id="UP000001014">
    <property type="component" value="Chromosome"/>
</dbReference>
<dbReference type="GO" id="GO:0005737">
    <property type="term" value="C:cytoplasm"/>
    <property type="evidence" value="ECO:0000318"/>
    <property type="project" value="GO_Central"/>
</dbReference>
<dbReference type="GO" id="GO:0051259">
    <property type="term" value="P:protein complex oligomerization"/>
    <property type="evidence" value="ECO:0007669"/>
    <property type="project" value="InterPro"/>
</dbReference>
<dbReference type="GO" id="GO:0006457">
    <property type="term" value="P:protein folding"/>
    <property type="evidence" value="ECO:0007669"/>
    <property type="project" value="UniProtKB-UniRule"/>
</dbReference>
<dbReference type="GO" id="GO:0051604">
    <property type="term" value="P:protein maturation"/>
    <property type="evidence" value="ECO:0000318"/>
    <property type="project" value="GO_Central"/>
</dbReference>
<dbReference type="Gene3D" id="1.20.120.1820">
    <property type="match status" value="1"/>
</dbReference>
<dbReference type="Gene3D" id="1.20.1280.20">
    <property type="entry name" value="HscB, C-terminal domain"/>
    <property type="match status" value="1"/>
</dbReference>
<dbReference type="HAMAP" id="MF_01150">
    <property type="entry name" value="TorD"/>
    <property type="match status" value="1"/>
</dbReference>
<dbReference type="InterPro" id="IPR023069">
    <property type="entry name" value="Chaperone_TorD"/>
</dbReference>
<dbReference type="InterPro" id="IPR020945">
    <property type="entry name" value="DMSO/NO3_reduct_chaperone"/>
</dbReference>
<dbReference type="InterPro" id="IPR036386">
    <property type="entry name" value="HscB_C_sf"/>
</dbReference>
<dbReference type="InterPro" id="IPR036411">
    <property type="entry name" value="TorD-like_sf"/>
</dbReference>
<dbReference type="InterPro" id="IPR050289">
    <property type="entry name" value="TorD/DmsD_chaperones"/>
</dbReference>
<dbReference type="NCBIfam" id="NF003442">
    <property type="entry name" value="PRK04976.1"/>
    <property type="match status" value="1"/>
</dbReference>
<dbReference type="PANTHER" id="PTHR34227:SF11">
    <property type="entry name" value="CHAPERONE PROTEIN TORD"/>
    <property type="match status" value="1"/>
</dbReference>
<dbReference type="PANTHER" id="PTHR34227">
    <property type="entry name" value="CHAPERONE PROTEIN YCDY"/>
    <property type="match status" value="1"/>
</dbReference>
<dbReference type="Pfam" id="PF02613">
    <property type="entry name" value="Nitrate_red_del"/>
    <property type="match status" value="1"/>
</dbReference>
<dbReference type="SUPFAM" id="SSF89155">
    <property type="entry name" value="TorD-like"/>
    <property type="match status" value="1"/>
</dbReference>
<reference key="1">
    <citation type="journal article" date="2001" name="Nature">
        <title>Complete genome sequence of Salmonella enterica serovar Typhimurium LT2.</title>
        <authorList>
            <person name="McClelland M."/>
            <person name="Sanderson K.E."/>
            <person name="Spieth J."/>
            <person name="Clifton S.W."/>
            <person name="Latreille P."/>
            <person name="Courtney L."/>
            <person name="Porwollik S."/>
            <person name="Ali J."/>
            <person name="Dante M."/>
            <person name="Du F."/>
            <person name="Hou S."/>
            <person name="Layman D."/>
            <person name="Leonard S."/>
            <person name="Nguyen C."/>
            <person name="Scott K."/>
            <person name="Holmes A."/>
            <person name="Grewal N."/>
            <person name="Mulvaney E."/>
            <person name="Ryan E."/>
            <person name="Sun H."/>
            <person name="Florea L."/>
            <person name="Miller W."/>
            <person name="Stoneking T."/>
            <person name="Nhan M."/>
            <person name="Waterston R."/>
            <person name="Wilson R.K."/>
        </authorList>
    </citation>
    <scope>NUCLEOTIDE SEQUENCE [LARGE SCALE GENOMIC DNA]</scope>
    <source>
        <strain>LT2 / SGSC1412 / ATCC 700720</strain>
    </source>
</reference>
<accession>Q8ZKZ8</accession>
<proteinExistence type="inferred from homology"/>
<feature type="chain" id="PRO_0000211641" description="Chaperone protein TorD">
    <location>
        <begin position="1"/>
        <end position="210"/>
    </location>
</feature>
<protein>
    <recommendedName>
        <fullName evidence="1">Chaperone protein TorD</fullName>
    </recommendedName>
</protein>
<sequence>MIKQPALAQEQYACVYAWLALLFFREVDDEGLIQLQSAEIADWLALLKRQPALAASVALLEQKIAALSLRQDAQLELAADFCGLFLMTDKKSALPYASQYPQQEPGMIKHLLLEAGMEVNDDFKEPTDHLAIYLELLSHLHFSLGESFQQRRMNKLRQKTLSSLLEWLPEFTNNCLKHDPYGFYAALSQLLLAIVRFDDGKEDLSIVAAE</sequence>